<organism>
    <name type="scientific">Campylobacter jejuni subsp. jejuni serotype O:2 (strain ATCC 700819 / NCTC 11168)</name>
    <dbReference type="NCBI Taxonomy" id="192222"/>
    <lineage>
        <taxon>Bacteria</taxon>
        <taxon>Pseudomonadati</taxon>
        <taxon>Campylobacterota</taxon>
        <taxon>Epsilonproteobacteria</taxon>
        <taxon>Campylobacterales</taxon>
        <taxon>Campylobacteraceae</taxon>
        <taxon>Campylobacter</taxon>
    </lineage>
</organism>
<gene>
    <name evidence="1" type="primary">rplR</name>
    <name type="ordered locus">Cj1691c</name>
</gene>
<sequence>MRANVLKRKLTLRIKRKKRIRAKISGCENFPRISVFKSNRTLYIQAIDDVKAVTLAAVDGRKLGVKANKEGAKKIAAEFAKTLKVKKIEQAVFDRNGYVYHGVIAALAESLRENGIRL</sequence>
<evidence type="ECO:0000255" key="1">
    <source>
        <dbReference type="HAMAP-Rule" id="MF_01337"/>
    </source>
</evidence>
<evidence type="ECO:0000305" key="2"/>
<reference key="1">
    <citation type="journal article" date="2000" name="Nature">
        <title>The genome sequence of the food-borne pathogen Campylobacter jejuni reveals hypervariable sequences.</title>
        <authorList>
            <person name="Parkhill J."/>
            <person name="Wren B.W."/>
            <person name="Mungall K.L."/>
            <person name="Ketley J.M."/>
            <person name="Churcher C.M."/>
            <person name="Basham D."/>
            <person name="Chillingworth T."/>
            <person name="Davies R.M."/>
            <person name="Feltwell T."/>
            <person name="Holroyd S."/>
            <person name="Jagels K."/>
            <person name="Karlyshev A.V."/>
            <person name="Moule S."/>
            <person name="Pallen M.J."/>
            <person name="Penn C.W."/>
            <person name="Quail M.A."/>
            <person name="Rajandream M.A."/>
            <person name="Rutherford K.M."/>
            <person name="van Vliet A.H.M."/>
            <person name="Whitehead S."/>
            <person name="Barrell B.G."/>
        </authorList>
    </citation>
    <scope>NUCLEOTIDE SEQUENCE [LARGE SCALE GENOMIC DNA]</scope>
    <source>
        <strain>ATCC 700819 / NCTC 11168</strain>
    </source>
</reference>
<dbReference type="EMBL" id="AL111168">
    <property type="protein sequence ID" value="CAL35785.1"/>
    <property type="molecule type" value="Genomic_DNA"/>
</dbReference>
<dbReference type="PIR" id="G81266">
    <property type="entry name" value="G81266"/>
</dbReference>
<dbReference type="RefSeq" id="WP_002851411.1">
    <property type="nucleotide sequence ID" value="NZ_SZUC01000002.1"/>
</dbReference>
<dbReference type="RefSeq" id="YP_002345057.1">
    <property type="nucleotide sequence ID" value="NC_002163.1"/>
</dbReference>
<dbReference type="SMR" id="Q9PLY7"/>
<dbReference type="IntAct" id="Q9PLY7">
    <property type="interactions" value="1"/>
</dbReference>
<dbReference type="STRING" id="192222.Cj1691c"/>
<dbReference type="PaxDb" id="192222-Cj1691c"/>
<dbReference type="EnsemblBacteria" id="CAL35785">
    <property type="protein sequence ID" value="CAL35785"/>
    <property type="gene ID" value="Cj1691c"/>
</dbReference>
<dbReference type="GeneID" id="905965"/>
<dbReference type="KEGG" id="cje:Cj1691c"/>
<dbReference type="PATRIC" id="fig|192222.6.peg.1665"/>
<dbReference type="eggNOG" id="COG0256">
    <property type="taxonomic scope" value="Bacteria"/>
</dbReference>
<dbReference type="HOGENOM" id="CLU_098841_0_1_7"/>
<dbReference type="OrthoDB" id="9810939at2"/>
<dbReference type="Proteomes" id="UP000000799">
    <property type="component" value="Chromosome"/>
</dbReference>
<dbReference type="GO" id="GO:0022625">
    <property type="term" value="C:cytosolic large ribosomal subunit"/>
    <property type="evidence" value="ECO:0007669"/>
    <property type="project" value="TreeGrafter"/>
</dbReference>
<dbReference type="GO" id="GO:0008097">
    <property type="term" value="F:5S rRNA binding"/>
    <property type="evidence" value="ECO:0007669"/>
    <property type="project" value="TreeGrafter"/>
</dbReference>
<dbReference type="GO" id="GO:0003735">
    <property type="term" value="F:structural constituent of ribosome"/>
    <property type="evidence" value="ECO:0007669"/>
    <property type="project" value="InterPro"/>
</dbReference>
<dbReference type="GO" id="GO:0006412">
    <property type="term" value="P:translation"/>
    <property type="evidence" value="ECO:0007669"/>
    <property type="project" value="UniProtKB-UniRule"/>
</dbReference>
<dbReference type="CDD" id="cd00432">
    <property type="entry name" value="Ribosomal_L18_L5e"/>
    <property type="match status" value="1"/>
</dbReference>
<dbReference type="Gene3D" id="3.30.420.100">
    <property type="match status" value="1"/>
</dbReference>
<dbReference type="HAMAP" id="MF_01337_B">
    <property type="entry name" value="Ribosomal_uL18_B"/>
    <property type="match status" value="1"/>
</dbReference>
<dbReference type="InterPro" id="IPR004389">
    <property type="entry name" value="Ribosomal_uL18_bac-type"/>
</dbReference>
<dbReference type="InterPro" id="IPR005484">
    <property type="entry name" value="Ribosomal_uL18_bac/euk"/>
</dbReference>
<dbReference type="NCBIfam" id="TIGR00060">
    <property type="entry name" value="L18_bact"/>
    <property type="match status" value="1"/>
</dbReference>
<dbReference type="PANTHER" id="PTHR12899">
    <property type="entry name" value="39S RIBOSOMAL PROTEIN L18, MITOCHONDRIAL"/>
    <property type="match status" value="1"/>
</dbReference>
<dbReference type="PANTHER" id="PTHR12899:SF3">
    <property type="entry name" value="LARGE RIBOSOMAL SUBUNIT PROTEIN UL18M"/>
    <property type="match status" value="1"/>
</dbReference>
<dbReference type="Pfam" id="PF00861">
    <property type="entry name" value="Ribosomal_L18p"/>
    <property type="match status" value="1"/>
</dbReference>
<dbReference type="SUPFAM" id="SSF53137">
    <property type="entry name" value="Translational machinery components"/>
    <property type="match status" value="1"/>
</dbReference>
<name>RL18_CAMJE</name>
<comment type="function">
    <text evidence="1">This is one of the proteins that bind and probably mediate the attachment of the 5S RNA into the large ribosomal subunit, where it forms part of the central protuberance.</text>
</comment>
<comment type="subunit">
    <text evidence="1">Part of the 50S ribosomal subunit; part of the 5S rRNA/L5/L18/L25 subcomplex. Contacts the 5S and 23S rRNAs.</text>
</comment>
<comment type="similarity">
    <text evidence="1">Belongs to the universal ribosomal protein uL18 family.</text>
</comment>
<protein>
    <recommendedName>
        <fullName evidence="1">Large ribosomal subunit protein uL18</fullName>
    </recommendedName>
    <alternativeName>
        <fullName evidence="2">50S ribosomal protein L18</fullName>
    </alternativeName>
</protein>
<accession>Q9PLY7</accession>
<accession>Q0P7U0</accession>
<keyword id="KW-1185">Reference proteome</keyword>
<keyword id="KW-0687">Ribonucleoprotein</keyword>
<keyword id="KW-0689">Ribosomal protein</keyword>
<keyword id="KW-0694">RNA-binding</keyword>
<keyword id="KW-0699">rRNA-binding</keyword>
<proteinExistence type="inferred from homology"/>
<feature type="chain" id="PRO_0000131237" description="Large ribosomal subunit protein uL18">
    <location>
        <begin position="1"/>
        <end position="118"/>
    </location>
</feature>